<protein>
    <recommendedName>
        <fullName>Immunogenic protein MPT64</fullName>
    </recommendedName>
    <alternativeName>
        <fullName>Antigen MPT64</fullName>
    </alternativeName>
</protein>
<keyword id="KW-1185">Reference proteome</keyword>
<keyword id="KW-0964">Secreted</keyword>
<keyword id="KW-0732">Signal</keyword>
<feature type="signal peptide" evidence="1">
    <location>
        <begin position="1"/>
        <end position="23"/>
    </location>
</feature>
<feature type="chain" id="PRO_0000427972" description="Immunogenic protein MPT64">
    <location>
        <begin position="24"/>
        <end position="228"/>
    </location>
</feature>
<comment type="subcellular location">
    <subcellularLocation>
        <location evidence="1">Secreted</location>
    </subcellularLocation>
</comment>
<comment type="similarity">
    <text evidence="2">Belongs to the RsiV family.</text>
</comment>
<comment type="sequence caution" evidence="2">
    <conflict type="erroneous initiation">
        <sequence resource="EMBL-CDS" id="AAK46307"/>
    </conflict>
</comment>
<dbReference type="EMBL" id="AE000516">
    <property type="protein sequence ID" value="AAK46307.1"/>
    <property type="status" value="ALT_INIT"/>
    <property type="molecule type" value="Genomic_DNA"/>
</dbReference>
<dbReference type="PIR" id="B70756">
    <property type="entry name" value="B70756"/>
</dbReference>
<dbReference type="RefSeq" id="WP_003409954.1">
    <property type="nucleotide sequence ID" value="NZ_KK341227.1"/>
</dbReference>
<dbReference type="SMR" id="P9WIN8"/>
<dbReference type="KEGG" id="mtc:MT2032"/>
<dbReference type="PATRIC" id="fig|83331.31.peg.2187"/>
<dbReference type="HOGENOM" id="CLU_080703_0_0_11"/>
<dbReference type="Proteomes" id="UP000001020">
    <property type="component" value="Chromosome"/>
</dbReference>
<dbReference type="GO" id="GO:0005576">
    <property type="term" value="C:extracellular region"/>
    <property type="evidence" value="ECO:0007669"/>
    <property type="project" value="UniProtKB-SubCell"/>
</dbReference>
<dbReference type="Gene3D" id="3.30.565.40">
    <property type="entry name" value="Fervidobacterium nodosum Rt17-B1 like"/>
    <property type="match status" value="1"/>
</dbReference>
<dbReference type="Gene3D" id="3.90.640.20">
    <property type="entry name" value="Heat-shock cognate protein, ATPase"/>
    <property type="match status" value="1"/>
</dbReference>
<dbReference type="InterPro" id="IPR021729">
    <property type="entry name" value="DUF3298"/>
</dbReference>
<dbReference type="InterPro" id="IPR053421">
    <property type="entry name" value="Esterase_Immunogenic_RsiV"/>
</dbReference>
<dbReference type="InterPro" id="IPR037126">
    <property type="entry name" value="PdaC/RsiV-like_sf"/>
</dbReference>
<dbReference type="NCBIfam" id="NF043047">
    <property type="entry name" value="EstaseRv3036c"/>
    <property type="match status" value="1"/>
</dbReference>
<dbReference type="Pfam" id="PF11738">
    <property type="entry name" value="DUF3298"/>
    <property type="match status" value="1"/>
</dbReference>
<name>MP64_MYCTO</name>
<gene>
    <name type="primary">mpt64</name>
    <name type="ordered locus">MT2032</name>
</gene>
<organism>
    <name type="scientific">Mycobacterium tuberculosis (strain CDC 1551 / Oshkosh)</name>
    <dbReference type="NCBI Taxonomy" id="83331"/>
    <lineage>
        <taxon>Bacteria</taxon>
        <taxon>Bacillati</taxon>
        <taxon>Actinomycetota</taxon>
        <taxon>Actinomycetes</taxon>
        <taxon>Mycobacteriales</taxon>
        <taxon>Mycobacteriaceae</taxon>
        <taxon>Mycobacterium</taxon>
        <taxon>Mycobacterium tuberculosis complex</taxon>
    </lineage>
</organism>
<accession>P9WIN8</accession>
<accession>L0TB55</accession>
<accession>P0A5Q4</accession>
<accession>P19996</accession>
<sequence length="228" mass="24855">MRIKIFMLVTAVVLLCCSGVATAAPKTYCEELKGTDTGQACQIQMSDPAYNINISLPSYYPDQKSLENYIAQTRDKFLSAATSSTPREAPYELNITSATYQSAIPPRGTQAVVLKVYQNAGGTHPTTTYKAFDWDQAYRKPITYDTLWQADTDPLPVVFPIVQGELSKQTGQQVSIAPNAGLDPVNYQNFAVTNDGVIFFFNPGELLPEAAGPTQVLVPRSAIDSMLA</sequence>
<evidence type="ECO:0000250" key="1"/>
<evidence type="ECO:0000305" key="2"/>
<reference key="1">
    <citation type="journal article" date="2002" name="J. Bacteriol.">
        <title>Whole-genome comparison of Mycobacterium tuberculosis clinical and laboratory strains.</title>
        <authorList>
            <person name="Fleischmann R.D."/>
            <person name="Alland D."/>
            <person name="Eisen J.A."/>
            <person name="Carpenter L."/>
            <person name="White O."/>
            <person name="Peterson J.D."/>
            <person name="DeBoy R.T."/>
            <person name="Dodson R.J."/>
            <person name="Gwinn M.L."/>
            <person name="Haft D.H."/>
            <person name="Hickey E.K."/>
            <person name="Kolonay J.F."/>
            <person name="Nelson W.C."/>
            <person name="Umayam L.A."/>
            <person name="Ermolaeva M.D."/>
            <person name="Salzberg S.L."/>
            <person name="Delcher A."/>
            <person name="Utterback T.R."/>
            <person name="Weidman J.F."/>
            <person name="Khouri H.M."/>
            <person name="Gill J."/>
            <person name="Mikula A."/>
            <person name="Bishai W."/>
            <person name="Jacobs W.R. Jr."/>
            <person name="Venter J.C."/>
            <person name="Fraser C.M."/>
        </authorList>
    </citation>
    <scope>NUCLEOTIDE SEQUENCE [LARGE SCALE GENOMIC DNA]</scope>
    <source>
        <strain>CDC 1551 / Oshkosh</strain>
    </source>
</reference>
<proteinExistence type="inferred from homology"/>